<gene>
    <name type="primary">yvyI</name>
    <name type="synonym">pmi</name>
    <name type="ordered locus">BSU35790</name>
</gene>
<accession>P39841</accession>
<organism>
    <name type="scientific">Bacillus subtilis (strain 168)</name>
    <dbReference type="NCBI Taxonomy" id="224308"/>
    <lineage>
        <taxon>Bacteria</taxon>
        <taxon>Bacillati</taxon>
        <taxon>Bacillota</taxon>
        <taxon>Bacilli</taxon>
        <taxon>Bacillales</taxon>
        <taxon>Bacillaceae</taxon>
        <taxon>Bacillus</taxon>
    </lineage>
</organism>
<dbReference type="EC" id="5.3.1.8"/>
<dbReference type="EMBL" id="U02562">
    <property type="protein sequence ID" value="AAA67856.1"/>
    <property type="molecule type" value="Genomic_DNA"/>
</dbReference>
<dbReference type="EMBL" id="D45048">
    <property type="protein sequence ID" value="BAA08088.1"/>
    <property type="molecule type" value="Genomic_DNA"/>
</dbReference>
<dbReference type="EMBL" id="AL009126">
    <property type="protein sequence ID" value="CAB15596.1"/>
    <property type="molecule type" value="Genomic_DNA"/>
</dbReference>
<dbReference type="PIR" id="A69680">
    <property type="entry name" value="A69680"/>
</dbReference>
<dbReference type="PDB" id="1QWR">
    <property type="method" value="X-ray"/>
    <property type="resolution" value="1.80 A"/>
    <property type="chains" value="A/B=1-316"/>
</dbReference>
<dbReference type="PDBsum" id="1QWR"/>
<dbReference type="SMR" id="P39841"/>
<dbReference type="FunCoup" id="P39841">
    <property type="interactions" value="243"/>
</dbReference>
<dbReference type="IntAct" id="P39841">
    <property type="interactions" value="1"/>
</dbReference>
<dbReference type="STRING" id="224308.BSU35790"/>
<dbReference type="DrugBank" id="DB01942">
    <property type="generic name" value="Formic acid"/>
</dbReference>
<dbReference type="jPOST" id="P39841"/>
<dbReference type="PaxDb" id="224308-BSU35790"/>
<dbReference type="DNASU" id="936815"/>
<dbReference type="EnsemblBacteria" id="CAB15596">
    <property type="protein sequence ID" value="CAB15596"/>
    <property type="gene ID" value="BSU_35790"/>
</dbReference>
<dbReference type="GeneID" id="936815"/>
<dbReference type="KEGG" id="bsu:BSU35790"/>
<dbReference type="PATRIC" id="fig|224308.179.peg.3874"/>
<dbReference type="eggNOG" id="COG1482">
    <property type="taxonomic scope" value="Bacteria"/>
</dbReference>
<dbReference type="InParanoid" id="P39841"/>
<dbReference type="OrthoDB" id="9808275at2"/>
<dbReference type="PhylomeDB" id="P39841"/>
<dbReference type="BioCyc" id="BSUB:BSU35790-MONOMER"/>
<dbReference type="EvolutionaryTrace" id="P39841"/>
<dbReference type="Proteomes" id="UP000001570">
    <property type="component" value="Chromosome"/>
</dbReference>
<dbReference type="GO" id="GO:0004476">
    <property type="term" value="F:mannose-6-phosphate isomerase activity"/>
    <property type="evidence" value="ECO:0007669"/>
    <property type="project" value="UniProtKB-EC"/>
</dbReference>
<dbReference type="GO" id="GO:0008270">
    <property type="term" value="F:zinc ion binding"/>
    <property type="evidence" value="ECO:0007669"/>
    <property type="project" value="InterPro"/>
</dbReference>
<dbReference type="GO" id="GO:0005975">
    <property type="term" value="P:carbohydrate metabolic process"/>
    <property type="evidence" value="ECO:0007669"/>
    <property type="project" value="InterPro"/>
</dbReference>
<dbReference type="CDD" id="cd07010">
    <property type="entry name" value="cupin_PMI_type_I_N_bac"/>
    <property type="match status" value="1"/>
</dbReference>
<dbReference type="Gene3D" id="2.60.120.10">
    <property type="entry name" value="Jelly Rolls"/>
    <property type="match status" value="2"/>
</dbReference>
<dbReference type="InterPro" id="IPR051804">
    <property type="entry name" value="Carb_Metab_Reg_Kinase/Isom"/>
</dbReference>
<dbReference type="InterPro" id="IPR001250">
    <property type="entry name" value="Man6P_Isoase-1"/>
</dbReference>
<dbReference type="InterPro" id="IPR014628">
    <property type="entry name" value="Man6P_isomerase_Firm_short"/>
</dbReference>
<dbReference type="InterPro" id="IPR049071">
    <property type="entry name" value="MPI_cupin_dom"/>
</dbReference>
<dbReference type="InterPro" id="IPR046457">
    <property type="entry name" value="PMI_typeI_cat"/>
</dbReference>
<dbReference type="InterPro" id="IPR014710">
    <property type="entry name" value="RmlC-like_jellyroll"/>
</dbReference>
<dbReference type="InterPro" id="IPR011051">
    <property type="entry name" value="RmlC_Cupin_sf"/>
</dbReference>
<dbReference type="NCBIfam" id="TIGR00218">
    <property type="entry name" value="manA"/>
    <property type="match status" value="2"/>
</dbReference>
<dbReference type="PANTHER" id="PTHR42742:SF3">
    <property type="entry name" value="FRUCTOKINASE"/>
    <property type="match status" value="1"/>
</dbReference>
<dbReference type="PANTHER" id="PTHR42742">
    <property type="entry name" value="TRANSCRIPTIONAL REPRESSOR MPRA"/>
    <property type="match status" value="1"/>
</dbReference>
<dbReference type="Pfam" id="PF21621">
    <property type="entry name" value="MPI_cupin_dom"/>
    <property type="match status" value="1"/>
</dbReference>
<dbReference type="Pfam" id="PF20511">
    <property type="entry name" value="PMI_typeI_cat"/>
    <property type="match status" value="1"/>
</dbReference>
<dbReference type="PIRSF" id="PIRSF036894">
    <property type="entry name" value="PMI_Firm_short"/>
    <property type="match status" value="1"/>
</dbReference>
<dbReference type="SUPFAM" id="SSF51182">
    <property type="entry name" value="RmlC-like cupins"/>
    <property type="match status" value="1"/>
</dbReference>
<sequence length="316" mass="35428">MTQSPIFLTPVFKEKIWGGTALRDRFGYSIPSESTGECWAISAHPKGPSTVANGPYKGKTLIELWEEHREVFGGVEGDRFPLLTKLLDVKEDTSIKVHPDDYYAGENEEGELGKTECWYIIDCKENAEIIYGHTARSKTELVTMINSGDWEGLLRRIKIKPGDFYYVPSGTLHALCKGALVLETQQNSDATYRVYDYDRLDSNGSPRELHFAKAVNAATVPHVDGYIDESTESRKGITIKTFVQGEYFSVYKWDINGEAEMAQDESFLICSVIEGSGLLKYEDKTCPLKKGDHFILPAQMPDFTIKGTCTLIVSHI</sequence>
<reference key="1">
    <citation type="journal article" date="1994" name="Mol. Microbiol.">
        <title>The gene of the N-acetylglucosaminidase, a Bacillus subtilis 168 cell wall hydrolase not involved in vegetative cell autolysis.</title>
        <authorList>
            <person name="Margot P."/>
            <person name="Maueel C."/>
            <person name="Karamata D."/>
        </authorList>
    </citation>
    <scope>NUCLEOTIDE SEQUENCE [GENOMIC DNA]</scope>
    <source>
        <strain>168</strain>
    </source>
</reference>
<reference key="2">
    <citation type="journal article" date="1995" name="Microbiology">
        <title>Glucosaminidase of Bacillus subtilis: cloning, regulation, primary structure and biochemical characterization.</title>
        <authorList>
            <person name="Rashid M.H."/>
            <person name="Mori M."/>
            <person name="Sekiguchi J."/>
        </authorList>
    </citation>
    <scope>NUCLEOTIDE SEQUENCE [GENOMIC DNA]</scope>
    <source>
        <strain>168 / AC327</strain>
    </source>
</reference>
<reference key="3">
    <citation type="journal article" date="1997" name="Nature">
        <title>The complete genome sequence of the Gram-positive bacterium Bacillus subtilis.</title>
        <authorList>
            <person name="Kunst F."/>
            <person name="Ogasawara N."/>
            <person name="Moszer I."/>
            <person name="Albertini A.M."/>
            <person name="Alloni G."/>
            <person name="Azevedo V."/>
            <person name="Bertero M.G."/>
            <person name="Bessieres P."/>
            <person name="Bolotin A."/>
            <person name="Borchert S."/>
            <person name="Borriss R."/>
            <person name="Boursier L."/>
            <person name="Brans A."/>
            <person name="Braun M."/>
            <person name="Brignell S.C."/>
            <person name="Bron S."/>
            <person name="Brouillet S."/>
            <person name="Bruschi C.V."/>
            <person name="Caldwell B."/>
            <person name="Capuano V."/>
            <person name="Carter N.M."/>
            <person name="Choi S.-K."/>
            <person name="Codani J.-J."/>
            <person name="Connerton I.F."/>
            <person name="Cummings N.J."/>
            <person name="Daniel R.A."/>
            <person name="Denizot F."/>
            <person name="Devine K.M."/>
            <person name="Duesterhoeft A."/>
            <person name="Ehrlich S.D."/>
            <person name="Emmerson P.T."/>
            <person name="Entian K.-D."/>
            <person name="Errington J."/>
            <person name="Fabret C."/>
            <person name="Ferrari E."/>
            <person name="Foulger D."/>
            <person name="Fritz C."/>
            <person name="Fujita M."/>
            <person name="Fujita Y."/>
            <person name="Fuma S."/>
            <person name="Galizzi A."/>
            <person name="Galleron N."/>
            <person name="Ghim S.-Y."/>
            <person name="Glaser P."/>
            <person name="Goffeau A."/>
            <person name="Golightly E.J."/>
            <person name="Grandi G."/>
            <person name="Guiseppi G."/>
            <person name="Guy B.J."/>
            <person name="Haga K."/>
            <person name="Haiech J."/>
            <person name="Harwood C.R."/>
            <person name="Henaut A."/>
            <person name="Hilbert H."/>
            <person name="Holsappel S."/>
            <person name="Hosono S."/>
            <person name="Hullo M.-F."/>
            <person name="Itaya M."/>
            <person name="Jones L.-M."/>
            <person name="Joris B."/>
            <person name="Karamata D."/>
            <person name="Kasahara Y."/>
            <person name="Klaerr-Blanchard M."/>
            <person name="Klein C."/>
            <person name="Kobayashi Y."/>
            <person name="Koetter P."/>
            <person name="Koningstein G."/>
            <person name="Krogh S."/>
            <person name="Kumano M."/>
            <person name="Kurita K."/>
            <person name="Lapidus A."/>
            <person name="Lardinois S."/>
            <person name="Lauber J."/>
            <person name="Lazarevic V."/>
            <person name="Lee S.-M."/>
            <person name="Levine A."/>
            <person name="Liu H."/>
            <person name="Masuda S."/>
            <person name="Mauel C."/>
            <person name="Medigue C."/>
            <person name="Medina N."/>
            <person name="Mellado R.P."/>
            <person name="Mizuno M."/>
            <person name="Moestl D."/>
            <person name="Nakai S."/>
            <person name="Noback M."/>
            <person name="Noone D."/>
            <person name="O'Reilly M."/>
            <person name="Ogawa K."/>
            <person name="Ogiwara A."/>
            <person name="Oudega B."/>
            <person name="Park S.-H."/>
            <person name="Parro V."/>
            <person name="Pohl T.M."/>
            <person name="Portetelle D."/>
            <person name="Porwollik S."/>
            <person name="Prescott A.M."/>
            <person name="Presecan E."/>
            <person name="Pujic P."/>
            <person name="Purnelle B."/>
            <person name="Rapoport G."/>
            <person name="Rey M."/>
            <person name="Reynolds S."/>
            <person name="Rieger M."/>
            <person name="Rivolta C."/>
            <person name="Rocha E."/>
            <person name="Roche B."/>
            <person name="Rose M."/>
            <person name="Sadaie Y."/>
            <person name="Sato T."/>
            <person name="Scanlan E."/>
            <person name="Schleich S."/>
            <person name="Schroeter R."/>
            <person name="Scoffone F."/>
            <person name="Sekiguchi J."/>
            <person name="Sekowska A."/>
            <person name="Seror S.J."/>
            <person name="Serror P."/>
            <person name="Shin B.-S."/>
            <person name="Soldo B."/>
            <person name="Sorokin A."/>
            <person name="Tacconi E."/>
            <person name="Takagi T."/>
            <person name="Takahashi H."/>
            <person name="Takemaru K."/>
            <person name="Takeuchi M."/>
            <person name="Tamakoshi A."/>
            <person name="Tanaka T."/>
            <person name="Terpstra P."/>
            <person name="Tognoni A."/>
            <person name="Tosato V."/>
            <person name="Uchiyama S."/>
            <person name="Vandenbol M."/>
            <person name="Vannier F."/>
            <person name="Vassarotti A."/>
            <person name="Viari A."/>
            <person name="Wambutt R."/>
            <person name="Wedler E."/>
            <person name="Wedler H."/>
            <person name="Weitzenegger T."/>
            <person name="Winters P."/>
            <person name="Wipat A."/>
            <person name="Yamamoto H."/>
            <person name="Yamane K."/>
            <person name="Yasumoto K."/>
            <person name="Yata K."/>
            <person name="Yoshida K."/>
            <person name="Yoshikawa H.-F."/>
            <person name="Zumstein E."/>
            <person name="Yoshikawa H."/>
            <person name="Danchin A."/>
        </authorList>
    </citation>
    <scope>NUCLEOTIDE SEQUENCE [LARGE SCALE GENOMIC DNA]</scope>
    <source>
        <strain>168</strain>
    </source>
</reference>
<reference key="4">
    <citation type="submission" date="2005-01" db="PDB data bank">
        <title>Crystal structure analysis of the mannose 6-phosphate isomerase from Bacillus subtilis.</title>
        <authorList>
            <consortium name="Midwest center for structural genomics (MCSG)"/>
        </authorList>
    </citation>
    <scope>X-RAY CRYSTALLOGRAPHY (1.8 ANGSTROMS) IN COMPLEX WITH ZINC</scope>
</reference>
<comment type="catalytic activity">
    <reaction>
        <text>D-mannose 6-phosphate = D-fructose 6-phosphate</text>
        <dbReference type="Rhea" id="RHEA:12356"/>
        <dbReference type="ChEBI" id="CHEBI:58735"/>
        <dbReference type="ChEBI" id="CHEBI:61527"/>
        <dbReference type="EC" id="5.3.1.8"/>
    </reaction>
</comment>
<comment type="cofactor">
    <cofactor>
        <name>Zn(2+)</name>
        <dbReference type="ChEBI" id="CHEBI:29105"/>
    </cofactor>
    <text>Binds 1 zinc ion per subunit.</text>
</comment>
<comment type="similarity">
    <text evidence="3">Belongs to the mannose-6-phosphate isomerase type 1 family.</text>
</comment>
<name>MANA3_BACSU</name>
<protein>
    <recommendedName>
        <fullName>Putative mannose-6-phosphate isomerase YvyI</fullName>
        <ecNumber>5.3.1.8</ecNumber>
    </recommendedName>
    <alternativeName>
        <fullName>Phosphohexomutase</fullName>
    </alternativeName>
    <alternativeName>
        <fullName>Phosphomannose isomerase</fullName>
        <shortName>PMI</shortName>
    </alternativeName>
</protein>
<proteinExistence type="evidence at protein level"/>
<keyword id="KW-0002">3D-structure</keyword>
<keyword id="KW-0119">Carbohydrate metabolism</keyword>
<keyword id="KW-0413">Isomerase</keyword>
<keyword id="KW-0479">Metal-binding</keyword>
<keyword id="KW-1185">Reference proteome</keyword>
<keyword id="KW-0862">Zinc</keyword>
<feature type="chain" id="PRO_0000194228" description="Putative mannose-6-phosphate isomerase YvyI">
    <location>
        <begin position="1"/>
        <end position="316"/>
    </location>
</feature>
<feature type="active site" evidence="1">
    <location>
        <position position="193"/>
    </location>
</feature>
<feature type="binding site" evidence="2">
    <location>
        <position position="98"/>
    </location>
    <ligand>
        <name>Zn(2+)</name>
        <dbReference type="ChEBI" id="CHEBI:29105"/>
    </ligand>
</feature>
<feature type="binding site" evidence="2">
    <location>
        <position position="116"/>
    </location>
    <ligand>
        <name>Zn(2+)</name>
        <dbReference type="ChEBI" id="CHEBI:29105"/>
    </ligand>
</feature>
<feature type="binding site" evidence="2">
    <location>
        <position position="173"/>
    </location>
    <ligand>
        <name>Zn(2+)</name>
        <dbReference type="ChEBI" id="CHEBI:29105"/>
    </ligand>
</feature>
<feature type="strand" evidence="4">
    <location>
        <begin position="6"/>
        <end position="9"/>
    </location>
</feature>
<feature type="strand" evidence="4">
    <location>
        <begin position="11"/>
        <end position="14"/>
    </location>
</feature>
<feature type="helix" evidence="4">
    <location>
        <begin position="21"/>
        <end position="26"/>
    </location>
</feature>
<feature type="strand" evidence="4">
    <location>
        <begin position="31"/>
        <end position="41"/>
    </location>
</feature>
<feature type="turn" evidence="4">
    <location>
        <begin position="55"/>
        <end position="58"/>
    </location>
</feature>
<feature type="helix" evidence="4">
    <location>
        <begin position="61"/>
        <end position="67"/>
    </location>
</feature>
<feature type="helix" evidence="4">
    <location>
        <begin position="69"/>
        <end position="72"/>
    </location>
</feature>
<feature type="strand" evidence="4">
    <location>
        <begin position="82"/>
        <end position="91"/>
    </location>
</feature>
<feature type="strand" evidence="4">
    <location>
        <begin position="95"/>
        <end position="97"/>
    </location>
</feature>
<feature type="helix" evidence="4">
    <location>
        <begin position="101"/>
        <end position="107"/>
    </location>
</feature>
<feature type="turn" evidence="4">
    <location>
        <begin position="108"/>
        <end position="110"/>
    </location>
</feature>
<feature type="strand" evidence="4">
    <location>
        <begin position="116"/>
        <end position="123"/>
    </location>
</feature>
<feature type="strand" evidence="4">
    <location>
        <begin position="128"/>
        <end position="133"/>
    </location>
</feature>
<feature type="helix" evidence="4">
    <location>
        <begin position="138"/>
        <end position="146"/>
    </location>
</feature>
<feature type="helix" evidence="4">
    <location>
        <begin position="150"/>
        <end position="153"/>
    </location>
</feature>
<feature type="strand" evidence="4">
    <location>
        <begin position="154"/>
        <end position="158"/>
    </location>
</feature>
<feature type="strand" evidence="4">
    <location>
        <begin position="164"/>
        <end position="167"/>
    </location>
</feature>
<feature type="strand" evidence="4">
    <location>
        <begin position="173"/>
        <end position="175"/>
    </location>
</feature>
<feature type="strand" evidence="4">
    <location>
        <begin position="177"/>
        <end position="187"/>
    </location>
</feature>
<feature type="strand" evidence="4">
    <location>
        <begin position="192"/>
        <end position="195"/>
    </location>
</feature>
<feature type="helix" evidence="4">
    <location>
        <begin position="211"/>
        <end position="217"/>
    </location>
</feature>
<feature type="strand" evidence="4">
    <location>
        <begin position="230"/>
        <end position="234"/>
    </location>
</feature>
<feature type="strand" evidence="4">
    <location>
        <begin position="237"/>
        <end position="244"/>
    </location>
</feature>
<feature type="strand" evidence="4">
    <location>
        <begin position="249"/>
        <end position="261"/>
    </location>
</feature>
<feature type="strand" evidence="4">
    <location>
        <begin position="268"/>
        <end position="281"/>
    </location>
</feature>
<feature type="strand" evidence="4">
    <location>
        <begin position="284"/>
        <end position="289"/>
    </location>
</feature>
<feature type="strand" evidence="4">
    <location>
        <begin position="293"/>
        <end position="296"/>
    </location>
</feature>
<feature type="strand" evidence="4">
    <location>
        <begin position="303"/>
        <end position="315"/>
    </location>
</feature>
<evidence type="ECO:0000250" key="1">
    <source>
        <dbReference type="UniProtKB" id="P34948"/>
    </source>
</evidence>
<evidence type="ECO:0000269" key="2">
    <source ref="4"/>
</evidence>
<evidence type="ECO:0000305" key="3"/>
<evidence type="ECO:0007829" key="4">
    <source>
        <dbReference type="PDB" id="1QWR"/>
    </source>
</evidence>